<comment type="subcellular location">
    <subcellularLocation>
        <location evidence="1">Cell inner membrane</location>
        <topology evidence="1">Multi-pass membrane protein</topology>
    </subcellularLocation>
</comment>
<comment type="similarity">
    <text evidence="1">Belongs to the UPF0266 family.</text>
</comment>
<name>Y1755_YERPE</name>
<keyword id="KW-0997">Cell inner membrane</keyword>
<keyword id="KW-1003">Cell membrane</keyword>
<keyword id="KW-0472">Membrane</keyword>
<keyword id="KW-1185">Reference proteome</keyword>
<keyword id="KW-0812">Transmembrane</keyword>
<keyword id="KW-1133">Transmembrane helix</keyword>
<feature type="chain" id="PRO_0000218123" description="UPF0266 membrane protein YPO1755/y2554/YP_1637">
    <location>
        <begin position="1"/>
        <end position="153"/>
    </location>
</feature>
<feature type="transmembrane region" description="Helical" evidence="1">
    <location>
        <begin position="6"/>
        <end position="26"/>
    </location>
</feature>
<feature type="transmembrane region" description="Helical" evidence="1">
    <location>
        <begin position="45"/>
        <end position="65"/>
    </location>
</feature>
<feature type="transmembrane region" description="Helical" evidence="1">
    <location>
        <begin position="67"/>
        <end position="87"/>
    </location>
</feature>
<reference key="1">
    <citation type="journal article" date="2001" name="Nature">
        <title>Genome sequence of Yersinia pestis, the causative agent of plague.</title>
        <authorList>
            <person name="Parkhill J."/>
            <person name="Wren B.W."/>
            <person name="Thomson N.R."/>
            <person name="Titball R.W."/>
            <person name="Holden M.T.G."/>
            <person name="Prentice M.B."/>
            <person name="Sebaihia M."/>
            <person name="James K.D."/>
            <person name="Churcher C.M."/>
            <person name="Mungall K.L."/>
            <person name="Baker S."/>
            <person name="Basham D."/>
            <person name="Bentley S.D."/>
            <person name="Brooks K."/>
            <person name="Cerdeno-Tarraga A.-M."/>
            <person name="Chillingworth T."/>
            <person name="Cronin A."/>
            <person name="Davies R.M."/>
            <person name="Davis P."/>
            <person name="Dougan G."/>
            <person name="Feltwell T."/>
            <person name="Hamlin N."/>
            <person name="Holroyd S."/>
            <person name="Jagels K."/>
            <person name="Karlyshev A.V."/>
            <person name="Leather S."/>
            <person name="Moule S."/>
            <person name="Oyston P.C.F."/>
            <person name="Quail M.A."/>
            <person name="Rutherford K.M."/>
            <person name="Simmonds M."/>
            <person name="Skelton J."/>
            <person name="Stevens K."/>
            <person name="Whitehead S."/>
            <person name="Barrell B.G."/>
        </authorList>
    </citation>
    <scope>NUCLEOTIDE SEQUENCE [LARGE SCALE GENOMIC DNA]</scope>
    <source>
        <strain>CO-92 / Biovar Orientalis</strain>
    </source>
</reference>
<reference key="2">
    <citation type="journal article" date="2002" name="J. Bacteriol.">
        <title>Genome sequence of Yersinia pestis KIM.</title>
        <authorList>
            <person name="Deng W."/>
            <person name="Burland V."/>
            <person name="Plunkett G. III"/>
            <person name="Boutin A."/>
            <person name="Mayhew G.F."/>
            <person name="Liss P."/>
            <person name="Perna N.T."/>
            <person name="Rose D.J."/>
            <person name="Mau B."/>
            <person name="Zhou S."/>
            <person name="Schwartz D.C."/>
            <person name="Fetherston J.D."/>
            <person name="Lindler L.E."/>
            <person name="Brubaker R.R."/>
            <person name="Plano G.V."/>
            <person name="Straley S.C."/>
            <person name="McDonough K.A."/>
            <person name="Nilles M.L."/>
            <person name="Matson J.S."/>
            <person name="Blattner F.R."/>
            <person name="Perry R.D."/>
        </authorList>
    </citation>
    <scope>NUCLEOTIDE SEQUENCE [LARGE SCALE GENOMIC DNA]</scope>
    <source>
        <strain>KIM10+ / Biovar Mediaevalis</strain>
    </source>
</reference>
<reference key="3">
    <citation type="journal article" date="2004" name="DNA Res.">
        <title>Complete genome sequence of Yersinia pestis strain 91001, an isolate avirulent to humans.</title>
        <authorList>
            <person name="Song Y."/>
            <person name="Tong Z."/>
            <person name="Wang J."/>
            <person name="Wang L."/>
            <person name="Guo Z."/>
            <person name="Han Y."/>
            <person name="Zhang J."/>
            <person name="Pei D."/>
            <person name="Zhou D."/>
            <person name="Qin H."/>
            <person name="Pang X."/>
            <person name="Han Y."/>
            <person name="Zhai J."/>
            <person name="Li M."/>
            <person name="Cui B."/>
            <person name="Qi Z."/>
            <person name="Jin L."/>
            <person name="Dai R."/>
            <person name="Chen F."/>
            <person name="Li S."/>
            <person name="Ye C."/>
            <person name="Du Z."/>
            <person name="Lin W."/>
            <person name="Wang J."/>
            <person name="Yu J."/>
            <person name="Yang H."/>
            <person name="Wang J."/>
            <person name="Huang P."/>
            <person name="Yang R."/>
        </authorList>
    </citation>
    <scope>NUCLEOTIDE SEQUENCE [LARGE SCALE GENOMIC DNA]</scope>
    <source>
        <strain>91001 / Biovar Mediaevalis</strain>
    </source>
</reference>
<sequence length="153" mass="17809">MSVTDLVLVVFIALLLIYAIYDEFIMNMMKGKTRLQVHLKRKNKLDCMIFVGLIGILIYNNVMAHGAPLTTYLLVGLALVAVYISYIRWPKLLFKNTGFFYANTFIEYSRIKSMNLSEDGILVIDLEQRRLLIQVKKLDDLEKIYNFFIENQS</sequence>
<accession>Q8ZFF7</accession>
<accession>Q0WG34</accession>
<protein>
    <recommendedName>
        <fullName evidence="1">UPF0266 membrane protein YPO1755/y2554/YP_1637</fullName>
    </recommendedName>
</protein>
<gene>
    <name type="ordered locus">YPO1755</name>
    <name type="ordered locus">y2554</name>
    <name type="ordered locus">YP_1637</name>
</gene>
<dbReference type="EMBL" id="AL590842">
    <property type="protein sequence ID" value="CAL20397.1"/>
    <property type="molecule type" value="Genomic_DNA"/>
</dbReference>
<dbReference type="EMBL" id="AE009952">
    <property type="protein sequence ID" value="AAM86109.1"/>
    <property type="molecule type" value="Genomic_DNA"/>
</dbReference>
<dbReference type="EMBL" id="AE017042">
    <property type="protein sequence ID" value="AAS61869.1"/>
    <property type="molecule type" value="Genomic_DNA"/>
</dbReference>
<dbReference type="PIR" id="AB0214">
    <property type="entry name" value="AB0214"/>
</dbReference>
<dbReference type="RefSeq" id="WP_002211066.1">
    <property type="nucleotide sequence ID" value="NZ_WUCM01000019.1"/>
</dbReference>
<dbReference type="RefSeq" id="YP_002346754.1">
    <property type="nucleotide sequence ID" value="NC_003143.1"/>
</dbReference>
<dbReference type="STRING" id="214092.YPO1755"/>
<dbReference type="PaxDb" id="214092-YPO1755"/>
<dbReference type="EnsemblBacteria" id="AAS61869">
    <property type="protein sequence ID" value="AAS61869"/>
    <property type="gene ID" value="YP_1637"/>
</dbReference>
<dbReference type="KEGG" id="ype:YPO1755"/>
<dbReference type="KEGG" id="ypk:y2554"/>
<dbReference type="KEGG" id="ypm:YP_1637"/>
<dbReference type="PATRIC" id="fig|214092.21.peg.2112"/>
<dbReference type="eggNOG" id="COG4811">
    <property type="taxonomic scope" value="Bacteria"/>
</dbReference>
<dbReference type="HOGENOM" id="CLU_133645_0_0_6"/>
<dbReference type="OMA" id="LYLFWIR"/>
<dbReference type="OrthoDB" id="2360740at2"/>
<dbReference type="Proteomes" id="UP000000815">
    <property type="component" value="Chromosome"/>
</dbReference>
<dbReference type="Proteomes" id="UP000001019">
    <property type="component" value="Chromosome"/>
</dbReference>
<dbReference type="Proteomes" id="UP000002490">
    <property type="component" value="Chromosome"/>
</dbReference>
<dbReference type="GO" id="GO:0005886">
    <property type="term" value="C:plasma membrane"/>
    <property type="evidence" value="ECO:0007669"/>
    <property type="project" value="UniProtKB-SubCell"/>
</dbReference>
<dbReference type="HAMAP" id="MF_01071">
    <property type="entry name" value="UPF0266"/>
    <property type="match status" value="1"/>
</dbReference>
<dbReference type="InterPro" id="IPR009328">
    <property type="entry name" value="DUF986"/>
</dbReference>
<dbReference type="NCBIfam" id="NF002791">
    <property type="entry name" value="PRK02913.1"/>
    <property type="match status" value="1"/>
</dbReference>
<dbReference type="Pfam" id="PF06173">
    <property type="entry name" value="DUF986"/>
    <property type="match status" value="1"/>
</dbReference>
<dbReference type="PIRSF" id="PIRSF020687">
    <property type="entry name" value="UCP020687"/>
    <property type="match status" value="1"/>
</dbReference>
<evidence type="ECO:0000255" key="1">
    <source>
        <dbReference type="HAMAP-Rule" id="MF_01071"/>
    </source>
</evidence>
<organism>
    <name type="scientific">Yersinia pestis</name>
    <dbReference type="NCBI Taxonomy" id="632"/>
    <lineage>
        <taxon>Bacteria</taxon>
        <taxon>Pseudomonadati</taxon>
        <taxon>Pseudomonadota</taxon>
        <taxon>Gammaproteobacteria</taxon>
        <taxon>Enterobacterales</taxon>
        <taxon>Yersiniaceae</taxon>
        <taxon>Yersinia</taxon>
    </lineage>
</organism>
<proteinExistence type="inferred from homology"/>